<keyword id="KW-0328">Glycosyltransferase</keyword>
<keyword id="KW-0441">Lipid A biosynthesis</keyword>
<keyword id="KW-0444">Lipid biosynthesis</keyword>
<keyword id="KW-0443">Lipid metabolism</keyword>
<keyword id="KW-0808">Transferase</keyword>
<evidence type="ECO:0000255" key="1">
    <source>
        <dbReference type="HAMAP-Rule" id="MF_00392"/>
    </source>
</evidence>
<proteinExistence type="inferred from homology"/>
<organism>
    <name type="scientific">Pseudomonas paraeruginosa (strain DSM 24068 / PA7)</name>
    <name type="common">Pseudomonas aeruginosa (strain PA7)</name>
    <dbReference type="NCBI Taxonomy" id="381754"/>
    <lineage>
        <taxon>Bacteria</taxon>
        <taxon>Pseudomonadati</taxon>
        <taxon>Pseudomonadota</taxon>
        <taxon>Gammaproteobacteria</taxon>
        <taxon>Pseudomonadales</taxon>
        <taxon>Pseudomonadaceae</taxon>
        <taxon>Pseudomonas</taxon>
        <taxon>Pseudomonas paraeruginosa</taxon>
    </lineage>
</organism>
<gene>
    <name evidence="1" type="primary">lpxB</name>
    <name type="ordered locus">PSPA7_1496</name>
</gene>
<sequence>MAGRLRVALVAGEASGDILGSGLMQALRARHPEIEFIGVGGPRMEAEGLSSYFPMERLSVMGLVEVLGRLPELLRRRKRLIRTLIDARPDVMIGIDAPDFTLGVEHRLRQAGLRTVHYVSPSVWAWRQKRVLKIREACDLMLALFPFEARFYEEHGVPVRFVGHPLANTIPLQADRVAARERLGLPLDGQVVALMPGSRGGEVGKLGELFLDTAQRLLGERPGLRFVLPCASAARREQIERMLQGREPLPLTLLDGASHEALAACDAVLIASGTATLEALLYKRPMVVAYRVAGLTYRILKRLVKSPYISLPNLLAGRLLVPELIQDAATPRALATTLSPLLDDGSQQVEFFDAIHRALRQDASAQAAEAVLQLVERR</sequence>
<reference key="1">
    <citation type="submission" date="2007-06" db="EMBL/GenBank/DDBJ databases">
        <authorList>
            <person name="Dodson R.J."/>
            <person name="Harkins D."/>
            <person name="Paulsen I.T."/>
        </authorList>
    </citation>
    <scope>NUCLEOTIDE SEQUENCE [LARGE SCALE GENOMIC DNA]</scope>
    <source>
        <strain>DSM 24068 / PA7</strain>
    </source>
</reference>
<protein>
    <recommendedName>
        <fullName evidence="1">Lipid-A-disaccharide synthase</fullName>
        <ecNumber evidence="1">2.4.1.182</ecNumber>
    </recommendedName>
</protein>
<comment type="function">
    <text evidence="1">Condensation of UDP-2,3-diacylglucosamine and 2,3-diacylglucosamine-1-phosphate to form lipid A disaccharide, a precursor of lipid A, a phosphorylated glycolipid that anchors the lipopolysaccharide to the outer membrane of the cell.</text>
</comment>
<comment type="catalytic activity">
    <reaction evidence="1">
        <text>a lipid X + a UDP-2-N,3-O-bis[(3R)-3-hydroxyacyl]-alpha-D-glucosamine = a lipid A disaccharide + UDP + H(+)</text>
        <dbReference type="Rhea" id="RHEA:67828"/>
        <dbReference type="ChEBI" id="CHEBI:15378"/>
        <dbReference type="ChEBI" id="CHEBI:58223"/>
        <dbReference type="ChEBI" id="CHEBI:137748"/>
        <dbReference type="ChEBI" id="CHEBI:176338"/>
        <dbReference type="ChEBI" id="CHEBI:176343"/>
        <dbReference type="EC" id="2.4.1.182"/>
    </reaction>
</comment>
<comment type="pathway">
    <text evidence="1">Bacterial outer membrane biogenesis; LPS lipid A biosynthesis.</text>
</comment>
<comment type="similarity">
    <text evidence="1">Belongs to the LpxB family.</text>
</comment>
<dbReference type="EC" id="2.4.1.182" evidence="1"/>
<dbReference type="EMBL" id="CP000744">
    <property type="protein sequence ID" value="ABR83312.1"/>
    <property type="molecule type" value="Genomic_DNA"/>
</dbReference>
<dbReference type="RefSeq" id="WP_003153755.1">
    <property type="nucleotide sequence ID" value="NC_009656.1"/>
</dbReference>
<dbReference type="SMR" id="A6V1E5"/>
<dbReference type="CAZy" id="GT19">
    <property type="family name" value="Glycosyltransferase Family 19"/>
</dbReference>
<dbReference type="KEGG" id="pap:PSPA7_1496"/>
<dbReference type="HOGENOM" id="CLU_036577_3_0_6"/>
<dbReference type="UniPathway" id="UPA00973"/>
<dbReference type="Proteomes" id="UP000001582">
    <property type="component" value="Chromosome"/>
</dbReference>
<dbReference type="GO" id="GO:0016020">
    <property type="term" value="C:membrane"/>
    <property type="evidence" value="ECO:0007669"/>
    <property type="project" value="GOC"/>
</dbReference>
<dbReference type="GO" id="GO:0008915">
    <property type="term" value="F:lipid-A-disaccharide synthase activity"/>
    <property type="evidence" value="ECO:0007669"/>
    <property type="project" value="UniProtKB-UniRule"/>
</dbReference>
<dbReference type="GO" id="GO:0005543">
    <property type="term" value="F:phospholipid binding"/>
    <property type="evidence" value="ECO:0007669"/>
    <property type="project" value="TreeGrafter"/>
</dbReference>
<dbReference type="GO" id="GO:0009245">
    <property type="term" value="P:lipid A biosynthetic process"/>
    <property type="evidence" value="ECO:0007669"/>
    <property type="project" value="UniProtKB-UniRule"/>
</dbReference>
<dbReference type="Gene3D" id="3.40.50.2000">
    <property type="entry name" value="Glycogen Phosphorylase B"/>
    <property type="match status" value="1"/>
</dbReference>
<dbReference type="HAMAP" id="MF_00392">
    <property type="entry name" value="LpxB"/>
    <property type="match status" value="1"/>
</dbReference>
<dbReference type="InterPro" id="IPR003835">
    <property type="entry name" value="Glyco_trans_19"/>
</dbReference>
<dbReference type="NCBIfam" id="TIGR00215">
    <property type="entry name" value="lpxB"/>
    <property type="match status" value="1"/>
</dbReference>
<dbReference type="PANTHER" id="PTHR30372">
    <property type="entry name" value="LIPID-A-DISACCHARIDE SYNTHASE"/>
    <property type="match status" value="1"/>
</dbReference>
<dbReference type="PANTHER" id="PTHR30372:SF4">
    <property type="entry name" value="LIPID-A-DISACCHARIDE SYNTHASE, MITOCHONDRIAL-RELATED"/>
    <property type="match status" value="1"/>
</dbReference>
<dbReference type="Pfam" id="PF02684">
    <property type="entry name" value="LpxB"/>
    <property type="match status" value="1"/>
</dbReference>
<dbReference type="SUPFAM" id="SSF53756">
    <property type="entry name" value="UDP-Glycosyltransferase/glycogen phosphorylase"/>
    <property type="match status" value="1"/>
</dbReference>
<feature type="chain" id="PRO_1000049407" description="Lipid-A-disaccharide synthase">
    <location>
        <begin position="1"/>
        <end position="378"/>
    </location>
</feature>
<name>LPXB_PSEP7</name>
<accession>A6V1E5</accession>